<gene>
    <name type="primary">MUSTN1</name>
    <name type="synonym">PD284</name>
</gene>
<keyword id="KW-0517">Myogenesis</keyword>
<keyword id="KW-0539">Nucleus</keyword>
<keyword id="KW-1185">Reference proteome</keyword>
<protein>
    <recommendedName>
        <fullName>Musculoskeletal embryonic nuclear protein 1</fullName>
    </recommendedName>
</protein>
<feature type="chain" id="PRO_0000299450" description="Musculoskeletal embryonic nuclear protein 1">
    <location>
        <begin position="1"/>
        <end position="78"/>
    </location>
</feature>
<feature type="region of interest" description="Disordered" evidence="2">
    <location>
        <begin position="1"/>
        <end position="33"/>
    </location>
</feature>
<feature type="region of interest" description="Disordered" evidence="2">
    <location>
        <begin position="45"/>
        <end position="78"/>
    </location>
</feature>
<feature type="short sequence motif" description="Nuclear localization signal" evidence="1">
    <location>
        <begin position="6"/>
        <end position="14"/>
    </location>
</feature>
<feature type="compositionally biased region" description="Basic and acidic residues" evidence="2">
    <location>
        <begin position="64"/>
        <end position="78"/>
    </location>
</feature>
<accession>Q76MS9</accession>
<dbReference type="EMBL" id="AB040149">
    <property type="protein sequence ID" value="BAD13507.1"/>
    <property type="molecule type" value="mRNA"/>
</dbReference>
<dbReference type="RefSeq" id="NP_998745.1">
    <property type="nucleotide sequence ID" value="NM_213580.3"/>
</dbReference>
<dbReference type="SMR" id="Q76MS9"/>
<dbReference type="FunCoup" id="Q76MS9">
    <property type="interactions" value="73"/>
</dbReference>
<dbReference type="STRING" id="9031.ENSGALP00000035516"/>
<dbReference type="PaxDb" id="9031-ENSGALP00000035516"/>
<dbReference type="Ensembl" id="ENSGALT00010068041.1">
    <property type="protein sequence ID" value="ENSGALP00010041784.1"/>
    <property type="gene ID" value="ENSGALG00010028080.1"/>
</dbReference>
<dbReference type="GeneID" id="404773"/>
<dbReference type="KEGG" id="gga:404773"/>
<dbReference type="CTD" id="389125"/>
<dbReference type="VEuPathDB" id="HostDB:geneid_404773"/>
<dbReference type="eggNOG" id="ENOG502S75P">
    <property type="taxonomic scope" value="Eukaryota"/>
</dbReference>
<dbReference type="GeneTree" id="ENSGT00940000153920"/>
<dbReference type="HOGENOM" id="CLU_193377_0_0_1"/>
<dbReference type="InParanoid" id="Q76MS9"/>
<dbReference type="OMA" id="CEQMGSV"/>
<dbReference type="OrthoDB" id="9976882at2759"/>
<dbReference type="PhylomeDB" id="Q76MS9"/>
<dbReference type="PRO" id="PR:Q76MS9"/>
<dbReference type="Proteomes" id="UP000000539">
    <property type="component" value="Chromosome 12"/>
</dbReference>
<dbReference type="Bgee" id="ENSGALG00000001709">
    <property type="expression patterns" value="Expressed in heart and 9 other cell types or tissues"/>
</dbReference>
<dbReference type="GO" id="GO:0005634">
    <property type="term" value="C:nucleus"/>
    <property type="evidence" value="ECO:0000314"/>
    <property type="project" value="AgBase"/>
</dbReference>
<dbReference type="GO" id="GO:0002062">
    <property type="term" value="P:chondrocyte differentiation"/>
    <property type="evidence" value="ECO:0007669"/>
    <property type="project" value="InterPro"/>
</dbReference>
<dbReference type="GO" id="GO:0035988">
    <property type="term" value="P:chondrocyte proliferation"/>
    <property type="evidence" value="ECO:0007669"/>
    <property type="project" value="InterPro"/>
</dbReference>
<dbReference type="GO" id="GO:0014816">
    <property type="term" value="P:skeletal muscle satellite cell differentiation"/>
    <property type="evidence" value="ECO:0000315"/>
    <property type="project" value="UniProtKB"/>
</dbReference>
<dbReference type="GO" id="GO:0014841">
    <property type="term" value="P:skeletal muscle satellite cell proliferation"/>
    <property type="evidence" value="ECO:0000315"/>
    <property type="project" value="UniProtKB"/>
</dbReference>
<dbReference type="GO" id="GO:0042246">
    <property type="term" value="P:tissue regeneration"/>
    <property type="evidence" value="ECO:0007669"/>
    <property type="project" value="InterPro"/>
</dbReference>
<dbReference type="InterPro" id="IPR031394">
    <property type="entry name" value="MUSTN1"/>
</dbReference>
<dbReference type="Pfam" id="PF15682">
    <property type="entry name" value="Mustang"/>
    <property type="match status" value="1"/>
</dbReference>
<reference key="1">
    <citation type="submission" date="2004-04" db="EMBL/GenBank/DDBJ databases">
        <title>Chicken PD284 mRNA.</title>
        <authorList>
            <person name="Fujimori K."/>
            <person name="Kawasaki T."/>
            <person name="Oda A."/>
            <person name="Uyeda A."/>
            <person name="Zhong Y."/>
            <person name="Taguchi T."/>
        </authorList>
    </citation>
    <scope>NUCLEOTIDE SEQUENCE [MRNA]</scope>
</reference>
<reference key="2">
    <citation type="journal article" date="2013" name="Int. J. Mol. Sci.">
        <title>MUSTN1 mRNA Abundance and Protein Localization is Greatest in Muscle Tissues of Chinese Meat-Quality Chickens.</title>
        <authorList>
            <person name="Li J."/>
            <person name="Chen Y."/>
            <person name="Wang Y.G."/>
            <person name="Zhao X.L."/>
            <person name="Gilbert E.R."/>
            <person name="Liu Y.P."/>
            <person name="Wang Y."/>
            <person name="Hu Y.D."/>
            <person name="Zhu Q."/>
        </authorList>
    </citation>
    <scope>SUBCELLULAR LOCATION</scope>
    <scope>TISSUE SPECIFICITY</scope>
</reference>
<reference key="3">
    <citation type="journal article" date="2021" name="Exp. Cell Res.">
        <title>MUSTN1 is an indispensable factor in the proliferation, differentiation and apoptosis of skeletal muscle satellite cells in chicken.</title>
        <authorList>
            <person name="Hu Z."/>
            <person name="Xu H."/>
            <person name="Lu Y."/>
            <person name="He Q."/>
            <person name="Yan C."/>
            <person name="Zhao X."/>
            <person name="Tian Y."/>
            <person name="Yang C."/>
            <person name="Zhang Z."/>
            <person name="Qiu M."/>
            <person name="Wang Y."/>
        </authorList>
    </citation>
    <scope>FUNCTION</scope>
    <scope>TISSUE SPECIFICITY</scope>
</reference>
<proteinExistence type="evidence at transcript level"/>
<comment type="function">
    <text evidence="4">Promotes the differentiation and proliferation of skeletal muscle satellite cells.</text>
</comment>
<comment type="subcellular location">
    <subcellularLocation>
        <location evidence="3">Nucleus</location>
    </subcellularLocation>
</comment>
<comment type="tissue specificity">
    <text evidence="3 4">Predominantly expressed in heart and skeletal muscle (PubMed:23528857). Detected in skeletal muscle satellite cells where expression increases with cell proliferation (PubMed:34536390).</text>
</comment>
<comment type="similarity">
    <text evidence="5">Belongs to the MUSTN1 family.</text>
</comment>
<name>MSTN1_CHICK</name>
<organism>
    <name type="scientific">Gallus gallus</name>
    <name type="common">Chicken</name>
    <dbReference type="NCBI Taxonomy" id="9031"/>
    <lineage>
        <taxon>Eukaryota</taxon>
        <taxon>Metazoa</taxon>
        <taxon>Chordata</taxon>
        <taxon>Craniata</taxon>
        <taxon>Vertebrata</taxon>
        <taxon>Euteleostomi</taxon>
        <taxon>Archelosauria</taxon>
        <taxon>Archosauria</taxon>
        <taxon>Dinosauria</taxon>
        <taxon>Saurischia</taxon>
        <taxon>Theropoda</taxon>
        <taxon>Coelurosauria</taxon>
        <taxon>Aves</taxon>
        <taxon>Neognathae</taxon>
        <taxon>Galloanserae</taxon>
        <taxon>Galliformes</taxon>
        <taxon>Phasianidae</taxon>
        <taxon>Phasianinae</taxon>
        <taxon>Gallus</taxon>
    </lineage>
</organism>
<evidence type="ECO:0000255" key="1"/>
<evidence type="ECO:0000256" key="2">
    <source>
        <dbReference type="SAM" id="MobiDB-lite"/>
    </source>
</evidence>
<evidence type="ECO:0000269" key="3">
    <source>
    </source>
</evidence>
<evidence type="ECO:0000269" key="4">
    <source>
    </source>
</evidence>
<evidence type="ECO:0000305" key="5"/>
<sequence>MSQPDPVKKKRPPVKEEDLKGARGNLSKNQEIKSKTYQVMKQCEQMGSAAPSIFSRARTGSETVFEKSKDEPPKSVFG</sequence>